<gene>
    <name evidence="3" type="primary">M5</name>
</gene>
<comment type="function">
    <text evidence="5">Transcription factor that probably regulates the expression of the gene cluster that mediates the biosynthesis of squalestatin S1 (SQS1, also known as zaragozic acid A), a heavily oxidized fungal polyketide that offers potent cholesterol lowering activity by targeting squalene synthase (SS).</text>
</comment>
<comment type="subcellular location">
    <subcellularLocation>
        <location evidence="4">Nucleus</location>
    </subcellularLocation>
</comment>
<comment type="similarity">
    <text evidence="4">Belongs to the GLI C2H2-type zinc-finger protein family.</text>
</comment>
<feature type="chain" id="PRO_0000447835" description="C2H2-type zinc-finger transcription factor M5">
    <location>
        <begin position="1"/>
        <end position="126"/>
    </location>
</feature>
<feature type="zinc finger region" description="C2H2-type 1; degenerate" evidence="1">
    <location>
        <begin position="51"/>
        <end position="76"/>
    </location>
</feature>
<feature type="zinc finger region" description="C2H2-type 2; degenerate" evidence="1">
    <location>
        <begin position="83"/>
        <end position="115"/>
    </location>
</feature>
<feature type="region of interest" description="Disordered" evidence="2">
    <location>
        <begin position="17"/>
        <end position="52"/>
    </location>
</feature>
<feature type="region of interest" description="Disordered" evidence="2">
    <location>
        <begin position="103"/>
        <end position="126"/>
    </location>
</feature>
<feature type="compositionally biased region" description="Polar residues" evidence="2">
    <location>
        <begin position="38"/>
        <end position="48"/>
    </location>
</feature>
<feature type="compositionally biased region" description="Basic and acidic residues" evidence="2">
    <location>
        <begin position="115"/>
        <end position="126"/>
    </location>
</feature>
<proteinExistence type="inferred from homology"/>
<keyword id="KW-0479">Metal-binding</keyword>
<keyword id="KW-0539">Nucleus</keyword>
<keyword id="KW-0677">Repeat</keyword>
<keyword id="KW-0804">Transcription</keyword>
<keyword id="KW-0805">Transcription regulation</keyword>
<keyword id="KW-0862">Zinc</keyword>
<keyword id="KW-0863">Zinc-finger</keyword>
<organism>
    <name type="scientific">Phoma sp. (strain ATCC 20986 / MF5453)</name>
    <dbReference type="NCBI Taxonomy" id="1828523"/>
    <lineage>
        <taxon>Eukaryota</taxon>
        <taxon>Fungi</taxon>
        <taxon>Dikarya</taxon>
        <taxon>Ascomycota</taxon>
        <taxon>Pezizomycotina</taxon>
        <taxon>Dothideomycetes</taxon>
        <taxon>Pleosporomycetidae</taxon>
        <taxon>Pleosporales</taxon>
        <taxon>Pleosporineae</taxon>
        <taxon>Didymellaceae</taxon>
        <taxon>Phoma</taxon>
    </lineage>
</organism>
<protein>
    <recommendedName>
        <fullName evidence="3">C2H2-type zinc-finger transcription factor M5</fullName>
    </recommendedName>
    <alternativeName>
        <fullName evidence="3">Squalestatin S1 biosynthesis cluster protein M5</fullName>
    </alternativeName>
</protein>
<evidence type="ECO:0000255" key="1">
    <source>
        <dbReference type="PROSITE-ProRule" id="PRU00042"/>
    </source>
</evidence>
<evidence type="ECO:0000256" key="2">
    <source>
        <dbReference type="SAM" id="MobiDB-lite"/>
    </source>
</evidence>
<evidence type="ECO:0000303" key="3">
    <source>
    </source>
</evidence>
<evidence type="ECO:0000305" key="4"/>
<evidence type="ECO:0000305" key="5">
    <source>
    </source>
</evidence>
<accession>A0A3G1DJG8</accession>
<dbReference type="EMBL" id="KU946987">
    <property type="protein sequence ID" value="AMY15062.1"/>
    <property type="molecule type" value="Genomic_DNA"/>
</dbReference>
<dbReference type="SMR" id="A0A3G1DJG8"/>
<dbReference type="GO" id="GO:0005634">
    <property type="term" value="C:nucleus"/>
    <property type="evidence" value="ECO:0007669"/>
    <property type="project" value="UniProtKB-SubCell"/>
</dbReference>
<dbReference type="GO" id="GO:0008270">
    <property type="term" value="F:zinc ion binding"/>
    <property type="evidence" value="ECO:0007669"/>
    <property type="project" value="UniProtKB-KW"/>
</dbReference>
<dbReference type="Gene3D" id="3.30.160.60">
    <property type="entry name" value="Classic Zinc Finger"/>
    <property type="match status" value="1"/>
</dbReference>
<dbReference type="InterPro" id="IPR036236">
    <property type="entry name" value="Znf_C2H2_sf"/>
</dbReference>
<dbReference type="SUPFAM" id="SSF57667">
    <property type="entry name" value="beta-beta-alpha zinc fingers"/>
    <property type="match status" value="1"/>
</dbReference>
<name>MFM5_PHOSM</name>
<sequence>MDIENWDTIDQLMADSAQPDFEDWGDLGDLMPDVLPESNGSSSGTATDNDNRCWDHGCNGKKFLNHSNLVRHRRENGSARPRFTCPMCGAYFSRSTARNQHLEKKSCNRVRRYSNGRERPRPRVKD</sequence>
<reference key="1">
    <citation type="journal article" date="2016" name="Chem. Commun. (Camb.)">
        <title>Identification of genes encoding squalestatin S1 biosynthesis and in vitro production of new squalestatin analogues.</title>
        <authorList>
            <person name="Bonsch B."/>
            <person name="Belt V."/>
            <person name="Bartel C."/>
            <person name="Duensing N."/>
            <person name="Koziol M."/>
            <person name="Lazarus C.M."/>
            <person name="Bailey A.M."/>
            <person name="Simpson T.J."/>
            <person name="Cox R.J."/>
        </authorList>
    </citation>
    <scope>NUCLEOTIDE SEQUENCE [GENOMIC DNA]</scope>
    <scope>FUNCTION</scope>
</reference>